<accession>Q39WP5</accession>
<keyword id="KW-0050">Antiport</keyword>
<keyword id="KW-0997">Cell inner membrane</keyword>
<keyword id="KW-1003">Cell membrane</keyword>
<keyword id="KW-0406">Ion transport</keyword>
<keyword id="KW-0472">Membrane</keyword>
<keyword id="KW-1185">Reference proteome</keyword>
<keyword id="KW-0915">Sodium</keyword>
<keyword id="KW-0739">Sodium transport</keyword>
<keyword id="KW-0812">Transmembrane</keyword>
<keyword id="KW-1133">Transmembrane helix</keyword>
<keyword id="KW-0813">Transport</keyword>
<dbReference type="EMBL" id="CP000148">
    <property type="protein sequence ID" value="ABB31329.1"/>
    <property type="molecule type" value="Genomic_DNA"/>
</dbReference>
<dbReference type="RefSeq" id="WP_011365771.1">
    <property type="nucleotide sequence ID" value="NC_007517.1"/>
</dbReference>
<dbReference type="SMR" id="Q39WP5"/>
<dbReference type="STRING" id="269799.Gmet_1089"/>
<dbReference type="TCDB" id="2.A.33.1.3">
    <property type="family name" value="the nhaa na(+):h(+) antiporter (nhaa) family"/>
</dbReference>
<dbReference type="KEGG" id="gme:Gmet_1089"/>
<dbReference type="eggNOG" id="COG3004">
    <property type="taxonomic scope" value="Bacteria"/>
</dbReference>
<dbReference type="HOGENOM" id="CLU_015803_1_2_7"/>
<dbReference type="Proteomes" id="UP000007073">
    <property type="component" value="Chromosome"/>
</dbReference>
<dbReference type="GO" id="GO:0005886">
    <property type="term" value="C:plasma membrane"/>
    <property type="evidence" value="ECO:0007669"/>
    <property type="project" value="UniProtKB-SubCell"/>
</dbReference>
<dbReference type="GO" id="GO:0015385">
    <property type="term" value="F:sodium:proton antiporter activity"/>
    <property type="evidence" value="ECO:0007669"/>
    <property type="project" value="TreeGrafter"/>
</dbReference>
<dbReference type="GO" id="GO:0006885">
    <property type="term" value="P:regulation of pH"/>
    <property type="evidence" value="ECO:0007669"/>
    <property type="project" value="InterPro"/>
</dbReference>
<dbReference type="Gene3D" id="1.20.1530.10">
    <property type="entry name" value="Na+/H+ antiporter like domain"/>
    <property type="match status" value="1"/>
</dbReference>
<dbReference type="HAMAP" id="MF_01844">
    <property type="entry name" value="NhaA"/>
    <property type="match status" value="1"/>
</dbReference>
<dbReference type="InterPro" id="IPR023171">
    <property type="entry name" value="Na/H_antiporter_dom_sf"/>
</dbReference>
<dbReference type="InterPro" id="IPR004670">
    <property type="entry name" value="NhaA"/>
</dbReference>
<dbReference type="PANTHER" id="PTHR30341:SF0">
    <property type="entry name" value="NA(+)_H(+) ANTIPORTER NHAA"/>
    <property type="match status" value="1"/>
</dbReference>
<dbReference type="PANTHER" id="PTHR30341">
    <property type="entry name" value="SODIUM ION/PROTON ANTIPORTER NHAA-RELATED"/>
    <property type="match status" value="1"/>
</dbReference>
<dbReference type="Pfam" id="PF06965">
    <property type="entry name" value="Na_H_antiport_1"/>
    <property type="match status" value="1"/>
</dbReference>
<comment type="function">
    <text evidence="1">Na(+)/H(+) antiporter that extrudes sodium in exchange for external protons.</text>
</comment>
<comment type="catalytic activity">
    <reaction evidence="1">
        <text>Na(+)(in) + 2 H(+)(out) = Na(+)(out) + 2 H(+)(in)</text>
        <dbReference type="Rhea" id="RHEA:29251"/>
        <dbReference type="ChEBI" id="CHEBI:15378"/>
        <dbReference type="ChEBI" id="CHEBI:29101"/>
    </reaction>
    <physiologicalReaction direction="left-to-right" evidence="1">
        <dbReference type="Rhea" id="RHEA:29252"/>
    </physiologicalReaction>
</comment>
<comment type="subcellular location">
    <subcellularLocation>
        <location evidence="1">Cell inner membrane</location>
        <topology evidence="1">Multi-pass membrane protein</topology>
    </subcellularLocation>
</comment>
<comment type="similarity">
    <text evidence="1">Belongs to the NhaA Na(+)/H(+) (TC 2.A.33) antiporter family.</text>
</comment>
<organism>
    <name type="scientific">Geobacter metallireducens (strain ATCC 53774 / DSM 7210 / GS-15)</name>
    <dbReference type="NCBI Taxonomy" id="269799"/>
    <lineage>
        <taxon>Bacteria</taxon>
        <taxon>Pseudomonadati</taxon>
        <taxon>Thermodesulfobacteriota</taxon>
        <taxon>Desulfuromonadia</taxon>
        <taxon>Geobacterales</taxon>
        <taxon>Geobacteraceae</taxon>
        <taxon>Geobacter</taxon>
    </lineage>
</organism>
<proteinExistence type="inferred from homology"/>
<protein>
    <recommendedName>
        <fullName evidence="1">Na(+)/H(+) antiporter NhaA</fullName>
    </recommendedName>
    <alternativeName>
        <fullName evidence="1">Sodium/proton antiporter NhaA</fullName>
    </alternativeName>
</protein>
<reference key="1">
    <citation type="journal article" date="2009" name="BMC Microbiol.">
        <title>The genome sequence of Geobacter metallireducens: features of metabolism, physiology and regulation common and dissimilar to Geobacter sulfurreducens.</title>
        <authorList>
            <person name="Aklujkar M."/>
            <person name="Krushkal J."/>
            <person name="DiBartolo G."/>
            <person name="Lapidus A."/>
            <person name="Land M.L."/>
            <person name="Lovley D.R."/>
        </authorList>
    </citation>
    <scope>NUCLEOTIDE SEQUENCE [LARGE SCALE GENOMIC DNA]</scope>
    <source>
        <strain>ATCC 53774 / DSM 7210 / GS-15</strain>
    </source>
</reference>
<feature type="chain" id="PRO_0000334305" description="Na(+)/H(+) antiporter NhaA">
    <location>
        <begin position="1"/>
        <end position="382"/>
    </location>
</feature>
<feature type="transmembrane region" description="Helical" evidence="1">
    <location>
        <begin position="5"/>
        <end position="25"/>
    </location>
</feature>
<feature type="transmembrane region" description="Helical" evidence="1">
    <location>
        <begin position="42"/>
        <end position="62"/>
    </location>
</feature>
<feature type="transmembrane region" description="Helical" evidence="1">
    <location>
        <begin position="88"/>
        <end position="108"/>
    </location>
</feature>
<feature type="transmembrane region" description="Helical" evidence="1">
    <location>
        <begin position="116"/>
        <end position="136"/>
    </location>
</feature>
<feature type="transmembrane region" description="Helical" evidence="1">
    <location>
        <begin position="145"/>
        <end position="165"/>
    </location>
</feature>
<feature type="transmembrane region" description="Helical" evidence="1">
    <location>
        <begin position="169"/>
        <end position="189"/>
    </location>
</feature>
<feature type="transmembrane region" description="Helical" evidence="1">
    <location>
        <begin position="261"/>
        <end position="281"/>
    </location>
</feature>
<feature type="transmembrane region" description="Helical" evidence="1">
    <location>
        <begin position="282"/>
        <end position="302"/>
    </location>
</feature>
<feature type="transmembrane region" description="Helical" evidence="1">
    <location>
        <begin position="327"/>
        <end position="347"/>
    </location>
</feature>
<feature type="transmembrane region" description="Helical" evidence="1">
    <location>
        <begin position="353"/>
        <end position="373"/>
    </location>
</feature>
<name>NHAA_GEOMG</name>
<sequence length="382" mass="40374">MRKPINLLREFSVPLIAGVITALAWANLDPRGYDALIHQPSFGGVSLHFLVNELFMVLFFGIAAAEITQSCLPGGDLNPPRKAVNPLLATLGGVIGPVLVYLSLNAVIGDPTLTKGWGIPTATDIALAWLVARLVFGAGHPAVSFLLLLAVADDAIGLAIIAVFYPDPVHPTEPMWLFLTVAGIVAAYILRGARAKSYWPYVLVGGGLSWTGLFKAHLHPALALVFIIPFLPHPPRESAHLFEENPRDTSPLARFEHDWKIVVDFGLFLFGLANAGVRFSSVGTATWLVLTALLVGKTAGILTMGSLGKALGFPLPDRVGFKELALTGLVAGMGLTVALFVAGVAFVDPDIEGAAKMGALLSGGVLPVAVALGRILKVRRIP</sequence>
<evidence type="ECO:0000255" key="1">
    <source>
        <dbReference type="HAMAP-Rule" id="MF_01844"/>
    </source>
</evidence>
<gene>
    <name evidence="1" type="primary">nhaA</name>
    <name type="ordered locus">Gmet_1089</name>
</gene>